<comment type="function">
    <text evidence="1">Has flap endonuclease activity. During DNA replication, flap endonucleases cleave the 5'-overhanging flap structure that is generated by displacement synthesis when DNA polymerase encounters the 5'-end of a downstream Okazaki fragment.</text>
</comment>
<comment type="cofactor">
    <cofactor evidence="1">
        <name>Mg(2+)</name>
        <dbReference type="ChEBI" id="CHEBI:18420"/>
    </cofactor>
    <text evidence="1">Binds 2 Mg(2+) per subunit. Only one magnesium ion has a direct interaction with the protein, the other interactions are indirect.</text>
</comment>
<comment type="cofactor">
    <cofactor evidence="1">
        <name>K(+)</name>
        <dbReference type="ChEBI" id="CHEBI:29103"/>
    </cofactor>
    <text evidence="1">Binds 1 K(+) per subunit. The potassium ion strongly increases the affinity for DNA.</text>
</comment>
<comment type="similarity">
    <text evidence="1">Belongs to the Xni family.</text>
</comment>
<dbReference type="EC" id="3.1.-.-" evidence="1"/>
<dbReference type="EMBL" id="AE014299">
    <property type="protein sequence ID" value="AAN54607.2"/>
    <property type="molecule type" value="Genomic_DNA"/>
</dbReference>
<dbReference type="RefSeq" id="NP_717163.2">
    <property type="nucleotide sequence ID" value="NC_004347.2"/>
</dbReference>
<dbReference type="RefSeq" id="WP_011071721.1">
    <property type="nucleotide sequence ID" value="NC_004347.2"/>
</dbReference>
<dbReference type="SMR" id="Q8EGP9"/>
<dbReference type="STRING" id="211586.SO_1549"/>
<dbReference type="PaxDb" id="211586-SO_1549"/>
<dbReference type="KEGG" id="son:SO_1549"/>
<dbReference type="PATRIC" id="fig|1028802.3.peg.410"/>
<dbReference type="eggNOG" id="COG0258">
    <property type="taxonomic scope" value="Bacteria"/>
</dbReference>
<dbReference type="HOGENOM" id="CLU_004675_1_2_6"/>
<dbReference type="OrthoDB" id="8070997at2"/>
<dbReference type="PhylomeDB" id="Q8EGP9"/>
<dbReference type="BioCyc" id="SONE211586:G1GMP-1429-MONOMER"/>
<dbReference type="Proteomes" id="UP000008186">
    <property type="component" value="Chromosome"/>
</dbReference>
<dbReference type="GO" id="GO:0008409">
    <property type="term" value="F:5'-3' exonuclease activity"/>
    <property type="evidence" value="ECO:0007669"/>
    <property type="project" value="InterPro"/>
</dbReference>
<dbReference type="GO" id="GO:0017108">
    <property type="term" value="F:5'-flap endonuclease activity"/>
    <property type="evidence" value="ECO:0000318"/>
    <property type="project" value="GO_Central"/>
</dbReference>
<dbReference type="GO" id="GO:0003677">
    <property type="term" value="F:DNA binding"/>
    <property type="evidence" value="ECO:0007669"/>
    <property type="project" value="UniProtKB-UniRule"/>
</dbReference>
<dbReference type="GO" id="GO:0000287">
    <property type="term" value="F:magnesium ion binding"/>
    <property type="evidence" value="ECO:0007669"/>
    <property type="project" value="UniProtKB-UniRule"/>
</dbReference>
<dbReference type="GO" id="GO:0030955">
    <property type="term" value="F:potassium ion binding"/>
    <property type="evidence" value="ECO:0007669"/>
    <property type="project" value="UniProtKB-UniRule"/>
</dbReference>
<dbReference type="GO" id="GO:0033567">
    <property type="term" value="P:DNA replication, Okazaki fragment processing"/>
    <property type="evidence" value="ECO:0000318"/>
    <property type="project" value="GO_Central"/>
</dbReference>
<dbReference type="CDD" id="cd09898">
    <property type="entry name" value="H3TH_53EXO"/>
    <property type="match status" value="1"/>
</dbReference>
<dbReference type="CDD" id="cd09859">
    <property type="entry name" value="PIN_53EXO"/>
    <property type="match status" value="1"/>
</dbReference>
<dbReference type="FunFam" id="1.10.150.20:FF:000003">
    <property type="entry name" value="DNA polymerase I"/>
    <property type="match status" value="1"/>
</dbReference>
<dbReference type="Gene3D" id="1.10.150.20">
    <property type="entry name" value="5' to 3' exonuclease, C-terminal subdomain"/>
    <property type="match status" value="1"/>
</dbReference>
<dbReference type="Gene3D" id="3.40.50.1010">
    <property type="entry name" value="5'-nuclease"/>
    <property type="match status" value="1"/>
</dbReference>
<dbReference type="HAMAP" id="MF_01192">
    <property type="entry name" value="Xni"/>
    <property type="match status" value="1"/>
</dbReference>
<dbReference type="InterPro" id="IPR020046">
    <property type="entry name" value="5-3_exonucl_a-hlix_arch_N"/>
</dbReference>
<dbReference type="InterPro" id="IPR002421">
    <property type="entry name" value="5-3_exonuclease"/>
</dbReference>
<dbReference type="InterPro" id="IPR036279">
    <property type="entry name" value="5-3_exonuclease_C_sf"/>
</dbReference>
<dbReference type="InterPro" id="IPR020045">
    <property type="entry name" value="DNA_polI_H3TH"/>
</dbReference>
<dbReference type="InterPro" id="IPR038969">
    <property type="entry name" value="FEN"/>
</dbReference>
<dbReference type="InterPro" id="IPR008918">
    <property type="entry name" value="HhH2"/>
</dbReference>
<dbReference type="InterPro" id="IPR029060">
    <property type="entry name" value="PIN-like_dom_sf"/>
</dbReference>
<dbReference type="InterPro" id="IPR022895">
    <property type="entry name" value="Xni"/>
</dbReference>
<dbReference type="NCBIfam" id="NF007017">
    <property type="entry name" value="PRK09482.1"/>
    <property type="match status" value="1"/>
</dbReference>
<dbReference type="PANTHER" id="PTHR42646:SF2">
    <property type="entry name" value="5'-3' EXONUCLEASE FAMILY PROTEIN"/>
    <property type="match status" value="1"/>
</dbReference>
<dbReference type="PANTHER" id="PTHR42646">
    <property type="entry name" value="FLAP ENDONUCLEASE XNI"/>
    <property type="match status" value="1"/>
</dbReference>
<dbReference type="Pfam" id="PF01367">
    <property type="entry name" value="5_3_exonuc"/>
    <property type="match status" value="1"/>
</dbReference>
<dbReference type="Pfam" id="PF02739">
    <property type="entry name" value="5_3_exonuc_N"/>
    <property type="match status" value="1"/>
</dbReference>
<dbReference type="SMART" id="SM00475">
    <property type="entry name" value="53EXOc"/>
    <property type="match status" value="1"/>
</dbReference>
<dbReference type="SMART" id="SM00279">
    <property type="entry name" value="HhH2"/>
    <property type="match status" value="1"/>
</dbReference>
<dbReference type="SUPFAM" id="SSF47807">
    <property type="entry name" value="5' to 3' exonuclease, C-terminal subdomain"/>
    <property type="match status" value="1"/>
</dbReference>
<dbReference type="SUPFAM" id="SSF88723">
    <property type="entry name" value="PIN domain-like"/>
    <property type="match status" value="1"/>
</dbReference>
<proteinExistence type="inferred from homology"/>
<gene>
    <name evidence="1" type="primary">xni</name>
    <name evidence="1" type="synonym">ygdG</name>
    <name type="ordered locus">SO_1549</name>
</gene>
<protein>
    <recommendedName>
        <fullName evidence="1">Flap endonuclease Xni</fullName>
        <shortName evidence="1">FEN</shortName>
        <ecNumber evidence="1">3.1.-.-</ecNumber>
    </recommendedName>
</protein>
<sequence>MNKFLIIDGLNLVRRIYAAIPDENDMESLTERVSVACTKLLRIHHPTHVAVVWDGDEISWRKQLYPDYKKGRKPMPEPLAAGLIALQEHLQNLQIQSIYAAAEADDVIATLATKTAKAQGEALIVSTDKGFSQLNHPRISQWDHFNQQYLNIAELEQKLGVDRSQFLDLMALAGDSGNKIPGIPGIGPKSAAELLRTFRTLATLFSSLPNLGAKQAKKLAEGRDMARLSYKLVQLQTDLPLNINLRDFRVNSPTKASSNNL</sequence>
<reference key="1">
    <citation type="journal article" date="2002" name="Nat. Biotechnol.">
        <title>Genome sequence of the dissimilatory metal ion-reducing bacterium Shewanella oneidensis.</title>
        <authorList>
            <person name="Heidelberg J.F."/>
            <person name="Paulsen I.T."/>
            <person name="Nelson K.E."/>
            <person name="Gaidos E.J."/>
            <person name="Nelson W.C."/>
            <person name="Read T.D."/>
            <person name="Eisen J.A."/>
            <person name="Seshadri R."/>
            <person name="Ward N.L."/>
            <person name="Methe B.A."/>
            <person name="Clayton R.A."/>
            <person name="Meyer T."/>
            <person name="Tsapin A."/>
            <person name="Scott J."/>
            <person name="Beanan M.J."/>
            <person name="Brinkac L.M."/>
            <person name="Daugherty S.C."/>
            <person name="DeBoy R.T."/>
            <person name="Dodson R.J."/>
            <person name="Durkin A.S."/>
            <person name="Haft D.H."/>
            <person name="Kolonay J.F."/>
            <person name="Madupu R."/>
            <person name="Peterson J.D."/>
            <person name="Umayam L.A."/>
            <person name="White O."/>
            <person name="Wolf A.M."/>
            <person name="Vamathevan J.J."/>
            <person name="Weidman J.F."/>
            <person name="Impraim M."/>
            <person name="Lee K."/>
            <person name="Berry K.J."/>
            <person name="Lee C."/>
            <person name="Mueller J."/>
            <person name="Khouri H.M."/>
            <person name="Gill J."/>
            <person name="Utterback T.R."/>
            <person name="McDonald L.A."/>
            <person name="Feldblyum T.V."/>
            <person name="Smith H.O."/>
            <person name="Venter J.C."/>
            <person name="Nealson K.H."/>
            <person name="Fraser C.M."/>
        </authorList>
    </citation>
    <scope>NUCLEOTIDE SEQUENCE [LARGE SCALE GENOMIC DNA]</scope>
    <source>
        <strain>ATCC 700550 / JCM 31522 / CIP 106686 / LMG 19005 / NCIMB 14063 / MR-1</strain>
    </source>
</reference>
<organism>
    <name type="scientific">Shewanella oneidensis (strain ATCC 700550 / JCM 31522 / CIP 106686 / LMG 19005 / NCIMB 14063 / MR-1)</name>
    <dbReference type="NCBI Taxonomy" id="211586"/>
    <lineage>
        <taxon>Bacteria</taxon>
        <taxon>Pseudomonadati</taxon>
        <taxon>Pseudomonadota</taxon>
        <taxon>Gammaproteobacteria</taxon>
        <taxon>Alteromonadales</taxon>
        <taxon>Shewanellaceae</taxon>
        <taxon>Shewanella</taxon>
    </lineage>
</organism>
<keyword id="KW-0238">DNA-binding</keyword>
<keyword id="KW-0255">Endonuclease</keyword>
<keyword id="KW-0378">Hydrolase</keyword>
<keyword id="KW-0460">Magnesium</keyword>
<keyword id="KW-0479">Metal-binding</keyword>
<keyword id="KW-0540">Nuclease</keyword>
<keyword id="KW-0630">Potassium</keyword>
<keyword id="KW-1185">Reference proteome</keyword>
<accession>Q8EGP9</accession>
<evidence type="ECO:0000255" key="1">
    <source>
        <dbReference type="HAMAP-Rule" id="MF_01192"/>
    </source>
</evidence>
<name>XNI_SHEON</name>
<feature type="chain" id="PRO_0000297877" description="Flap endonuclease Xni">
    <location>
        <begin position="1"/>
        <end position="261"/>
    </location>
</feature>
<feature type="domain" description="5'-3' exonuclease" evidence="1">
    <location>
        <begin position="164"/>
        <end position="256"/>
    </location>
</feature>
<feature type="region of interest" description="Interaction with DNA" evidence="1">
    <location>
        <begin position="185"/>
        <end position="190"/>
    </location>
</feature>
<feature type="binding site" evidence="1">
    <location>
        <position position="105"/>
    </location>
    <ligand>
        <name>Mg(2+)</name>
        <dbReference type="ChEBI" id="CHEBI:18420"/>
    </ligand>
</feature>
<feature type="binding site" evidence="1">
    <location>
        <position position="172"/>
    </location>
    <ligand>
        <name>K(+)</name>
        <dbReference type="ChEBI" id="CHEBI:29103"/>
    </ligand>
</feature>
<feature type="binding site" evidence="1">
    <location>
        <position position="173"/>
    </location>
    <ligand>
        <name>K(+)</name>
        <dbReference type="ChEBI" id="CHEBI:29103"/>
    </ligand>
</feature>
<feature type="binding site" evidence="1">
    <location>
        <position position="181"/>
    </location>
    <ligand>
        <name>K(+)</name>
        <dbReference type="ChEBI" id="CHEBI:29103"/>
    </ligand>
</feature>
<feature type="binding site" evidence="1">
    <location>
        <position position="183"/>
    </location>
    <ligand>
        <name>K(+)</name>
        <dbReference type="ChEBI" id="CHEBI:29103"/>
    </ligand>
</feature>
<feature type="binding site" evidence="1">
    <location>
        <position position="186"/>
    </location>
    <ligand>
        <name>K(+)</name>
        <dbReference type="ChEBI" id="CHEBI:29103"/>
    </ligand>
</feature>